<comment type="interaction">
    <interactant intactId="EBI-17963363">
        <id>Q5SWH9</id>
    </interactant>
    <interactant intactId="EBI-13059134">
        <id>Q13520</id>
        <label>AQP6</label>
    </interactant>
    <organismsDiffer>false</organismsDiffer>
    <experiments>3</experiments>
</comment>
<comment type="interaction">
    <interactant intactId="EBI-17963363">
        <id>Q5SWH9</id>
    </interactant>
    <interactant intactId="EBI-8638294">
        <id>Q9NUH8</id>
        <label>TMEM14B</label>
    </interactant>
    <organismsDiffer>false</organismsDiffer>
    <experiments>3</experiments>
</comment>
<comment type="interaction">
    <interactant intactId="EBI-17963363">
        <id>Q5SWH9</id>
    </interactant>
    <interactant intactId="EBI-11988865">
        <id>A5PKU2</id>
        <label>TUSC5</label>
    </interactant>
    <organismsDiffer>false</organismsDiffer>
    <experiments>3</experiments>
</comment>
<comment type="subcellular location">
    <subcellularLocation>
        <location evidence="2">Membrane</location>
        <topology evidence="2">Multi-pass membrane protein</topology>
    </subcellularLocation>
</comment>
<comment type="sequence caution" evidence="2">
    <conflict type="frameshift">
        <sequence resource="EMBL-CDS" id="AAF36149"/>
    </conflict>
</comment>
<organism>
    <name type="scientific">Homo sapiens</name>
    <name type="common">Human</name>
    <dbReference type="NCBI Taxonomy" id="9606"/>
    <lineage>
        <taxon>Eukaryota</taxon>
        <taxon>Metazoa</taxon>
        <taxon>Chordata</taxon>
        <taxon>Craniata</taxon>
        <taxon>Vertebrata</taxon>
        <taxon>Euteleostomi</taxon>
        <taxon>Mammalia</taxon>
        <taxon>Eutheria</taxon>
        <taxon>Euarchontoglires</taxon>
        <taxon>Primates</taxon>
        <taxon>Haplorrhini</taxon>
        <taxon>Catarrhini</taxon>
        <taxon>Hominidae</taxon>
        <taxon>Homo</taxon>
    </lineage>
</organism>
<sequence>MLRFIQKFSQASSKILKYSFPVGLRTSRTDILSLKMSLQQNFSPCPRPWLSSSFPAYMSKTQCYHTSPCSFKKQQKQALLARPSSTITYLTDSPKPALCVTLAGLIPFVAPPLVMLMTKTYIPILAFTQMAYGASFLSFLGGIRWGFALPEGSPAKPDYLNLASSAAPLFFSWFAFLISERLSEAIVTVIMGMGVAFHLELFLLPHYPNWFKALRIVVTLLATFSFIITLVVKSSFPEKGHKRPGQV</sequence>
<reference key="1">
    <citation type="journal article" date="2000" name="Genome Res.">
        <title>Cloning and functional analysis of cDNAs with open reading frames for 300 previously undefined genes expressed in CD34+ hematopoietic stem/progenitor cells.</title>
        <authorList>
            <person name="Zhang Q.-H."/>
            <person name="Ye M."/>
            <person name="Wu X.-Y."/>
            <person name="Ren S.-X."/>
            <person name="Zhao M."/>
            <person name="Zhao C.-J."/>
            <person name="Fu G."/>
            <person name="Shen Y."/>
            <person name="Fan H.-Y."/>
            <person name="Lu G."/>
            <person name="Zhong M."/>
            <person name="Xu X.-R."/>
            <person name="Han Z.-G."/>
            <person name="Zhang J.-W."/>
            <person name="Tao J."/>
            <person name="Huang Q.-H."/>
            <person name="Zhou J."/>
            <person name="Hu G.-X."/>
            <person name="Gu J."/>
            <person name="Chen S.-J."/>
            <person name="Chen Z."/>
        </authorList>
    </citation>
    <scope>NUCLEOTIDE SEQUENCE [LARGE SCALE MRNA]</scope>
    <source>
        <tissue>Umbilical cord blood</tissue>
    </source>
</reference>
<reference key="2">
    <citation type="journal article" date="2006" name="Nature">
        <title>The DNA sequence and biological annotation of human chromosome 1.</title>
        <authorList>
            <person name="Gregory S.G."/>
            <person name="Barlow K.F."/>
            <person name="McLay K.E."/>
            <person name="Kaul R."/>
            <person name="Swarbreck D."/>
            <person name="Dunham A."/>
            <person name="Scott C.E."/>
            <person name="Howe K.L."/>
            <person name="Woodfine K."/>
            <person name="Spencer C.C.A."/>
            <person name="Jones M.C."/>
            <person name="Gillson C."/>
            <person name="Searle S."/>
            <person name="Zhou Y."/>
            <person name="Kokocinski F."/>
            <person name="McDonald L."/>
            <person name="Evans R."/>
            <person name="Phillips K."/>
            <person name="Atkinson A."/>
            <person name="Cooper R."/>
            <person name="Jones C."/>
            <person name="Hall R.E."/>
            <person name="Andrews T.D."/>
            <person name="Lloyd C."/>
            <person name="Ainscough R."/>
            <person name="Almeida J.P."/>
            <person name="Ambrose K.D."/>
            <person name="Anderson F."/>
            <person name="Andrew R.W."/>
            <person name="Ashwell R.I.S."/>
            <person name="Aubin K."/>
            <person name="Babbage A.K."/>
            <person name="Bagguley C.L."/>
            <person name="Bailey J."/>
            <person name="Beasley H."/>
            <person name="Bethel G."/>
            <person name="Bird C.P."/>
            <person name="Bray-Allen S."/>
            <person name="Brown J.Y."/>
            <person name="Brown A.J."/>
            <person name="Buckley D."/>
            <person name="Burton J."/>
            <person name="Bye J."/>
            <person name="Carder C."/>
            <person name="Chapman J.C."/>
            <person name="Clark S.Y."/>
            <person name="Clarke G."/>
            <person name="Clee C."/>
            <person name="Cobley V."/>
            <person name="Collier R.E."/>
            <person name="Corby N."/>
            <person name="Coville G.J."/>
            <person name="Davies J."/>
            <person name="Deadman R."/>
            <person name="Dunn M."/>
            <person name="Earthrowl M."/>
            <person name="Ellington A.G."/>
            <person name="Errington H."/>
            <person name="Frankish A."/>
            <person name="Frankland J."/>
            <person name="French L."/>
            <person name="Garner P."/>
            <person name="Garnett J."/>
            <person name="Gay L."/>
            <person name="Ghori M.R.J."/>
            <person name="Gibson R."/>
            <person name="Gilby L.M."/>
            <person name="Gillett W."/>
            <person name="Glithero R.J."/>
            <person name="Grafham D.V."/>
            <person name="Griffiths C."/>
            <person name="Griffiths-Jones S."/>
            <person name="Grocock R."/>
            <person name="Hammond S."/>
            <person name="Harrison E.S.I."/>
            <person name="Hart E."/>
            <person name="Haugen E."/>
            <person name="Heath P.D."/>
            <person name="Holmes S."/>
            <person name="Holt K."/>
            <person name="Howden P.J."/>
            <person name="Hunt A.R."/>
            <person name="Hunt S.E."/>
            <person name="Hunter G."/>
            <person name="Isherwood J."/>
            <person name="James R."/>
            <person name="Johnson C."/>
            <person name="Johnson D."/>
            <person name="Joy A."/>
            <person name="Kay M."/>
            <person name="Kershaw J.K."/>
            <person name="Kibukawa M."/>
            <person name="Kimberley A.M."/>
            <person name="King A."/>
            <person name="Knights A.J."/>
            <person name="Lad H."/>
            <person name="Laird G."/>
            <person name="Lawlor S."/>
            <person name="Leongamornlert D.A."/>
            <person name="Lloyd D.M."/>
            <person name="Loveland J."/>
            <person name="Lovell J."/>
            <person name="Lush M.J."/>
            <person name="Lyne R."/>
            <person name="Martin S."/>
            <person name="Mashreghi-Mohammadi M."/>
            <person name="Matthews L."/>
            <person name="Matthews N.S.W."/>
            <person name="McLaren S."/>
            <person name="Milne S."/>
            <person name="Mistry S."/>
            <person name="Moore M.J.F."/>
            <person name="Nickerson T."/>
            <person name="O'Dell C.N."/>
            <person name="Oliver K."/>
            <person name="Palmeiri A."/>
            <person name="Palmer S.A."/>
            <person name="Parker A."/>
            <person name="Patel D."/>
            <person name="Pearce A.V."/>
            <person name="Peck A.I."/>
            <person name="Pelan S."/>
            <person name="Phelps K."/>
            <person name="Phillimore B.J."/>
            <person name="Plumb R."/>
            <person name="Rajan J."/>
            <person name="Raymond C."/>
            <person name="Rouse G."/>
            <person name="Saenphimmachak C."/>
            <person name="Sehra H.K."/>
            <person name="Sheridan E."/>
            <person name="Shownkeen R."/>
            <person name="Sims S."/>
            <person name="Skuce C.D."/>
            <person name="Smith M."/>
            <person name="Steward C."/>
            <person name="Subramanian S."/>
            <person name="Sycamore N."/>
            <person name="Tracey A."/>
            <person name="Tromans A."/>
            <person name="Van Helmond Z."/>
            <person name="Wall M."/>
            <person name="Wallis J.M."/>
            <person name="White S."/>
            <person name="Whitehead S.L."/>
            <person name="Wilkinson J.E."/>
            <person name="Willey D.L."/>
            <person name="Williams H."/>
            <person name="Wilming L."/>
            <person name="Wray P.W."/>
            <person name="Wu Z."/>
            <person name="Coulson A."/>
            <person name="Vaudin M."/>
            <person name="Sulston J.E."/>
            <person name="Durbin R.M."/>
            <person name="Hubbard T."/>
            <person name="Wooster R."/>
            <person name="Dunham I."/>
            <person name="Carter N.P."/>
            <person name="McVean G."/>
            <person name="Ross M.T."/>
            <person name="Harrow J."/>
            <person name="Olson M.V."/>
            <person name="Beck S."/>
            <person name="Rogers J."/>
            <person name="Bentley D.R."/>
        </authorList>
    </citation>
    <scope>NUCLEOTIDE SEQUENCE [LARGE SCALE GENOMIC DNA]</scope>
</reference>
<reference key="3">
    <citation type="submission" date="2005-09" db="EMBL/GenBank/DDBJ databases">
        <authorList>
            <person name="Mural R.J."/>
            <person name="Istrail S."/>
            <person name="Sutton G.G."/>
            <person name="Florea L."/>
            <person name="Halpern A.L."/>
            <person name="Mobarry C.M."/>
            <person name="Lippert R."/>
            <person name="Walenz B."/>
            <person name="Shatkay H."/>
            <person name="Dew I."/>
            <person name="Miller J.R."/>
            <person name="Flanigan M.J."/>
            <person name="Edwards N.J."/>
            <person name="Bolanos R."/>
            <person name="Fasulo D."/>
            <person name="Halldorsson B.V."/>
            <person name="Hannenhalli S."/>
            <person name="Turner R."/>
            <person name="Yooseph S."/>
            <person name="Lu F."/>
            <person name="Nusskern D.R."/>
            <person name="Shue B.C."/>
            <person name="Zheng X.H."/>
            <person name="Zhong F."/>
            <person name="Delcher A.L."/>
            <person name="Huson D.H."/>
            <person name="Kravitz S.A."/>
            <person name="Mouchard L."/>
            <person name="Reinert K."/>
            <person name="Remington K.A."/>
            <person name="Clark A.G."/>
            <person name="Waterman M.S."/>
            <person name="Eichler E.E."/>
            <person name="Adams M.D."/>
            <person name="Hunkapiller M.W."/>
            <person name="Myers E.W."/>
            <person name="Venter J.C."/>
        </authorList>
    </citation>
    <scope>NUCLEOTIDE SEQUENCE [LARGE SCALE GENOMIC DNA]</scope>
</reference>
<reference key="4">
    <citation type="journal article" date="2004" name="Genome Res.">
        <title>The status, quality, and expansion of the NIH full-length cDNA project: the Mammalian Gene Collection (MGC).</title>
        <authorList>
            <consortium name="The MGC Project Team"/>
        </authorList>
    </citation>
    <scope>NUCLEOTIDE SEQUENCE [LARGE SCALE MRNA]</scope>
    <source>
        <tissue>Lung</tissue>
        <tissue>Lymph</tissue>
        <tissue>Ovary</tissue>
        <tissue>Skin</tissue>
        <tissue>Uterus</tissue>
    </source>
</reference>
<dbReference type="EMBL" id="AF151063">
    <property type="protein sequence ID" value="AAF36149.1"/>
    <property type="status" value="ALT_FRAME"/>
    <property type="molecule type" value="mRNA"/>
</dbReference>
<dbReference type="EMBL" id="AL604028">
    <property type="status" value="NOT_ANNOTATED_CDS"/>
    <property type="molecule type" value="Genomic_DNA"/>
</dbReference>
<dbReference type="EMBL" id="CH471059">
    <property type="protein sequence ID" value="EAX06954.1"/>
    <property type="molecule type" value="Genomic_DNA"/>
</dbReference>
<dbReference type="EMBL" id="BC013608">
    <property type="protein sequence ID" value="AAH13608.2"/>
    <property type="molecule type" value="mRNA"/>
</dbReference>
<dbReference type="EMBL" id="BC034147">
    <property type="protein sequence ID" value="AAH34147.2"/>
    <property type="molecule type" value="mRNA"/>
</dbReference>
<dbReference type="EMBL" id="BC039718">
    <property type="protein sequence ID" value="AAH39718.2"/>
    <property type="molecule type" value="mRNA"/>
</dbReference>
<dbReference type="EMBL" id="BC046130">
    <property type="protein sequence ID" value="AAH46130.2"/>
    <property type="molecule type" value="mRNA"/>
</dbReference>
<dbReference type="EMBL" id="BC064539">
    <property type="protein sequence ID" value="AAH64539.2"/>
    <property type="molecule type" value="mRNA"/>
</dbReference>
<dbReference type="EMBL" id="BC073836">
    <property type="protein sequence ID" value="AAH73836.2"/>
    <property type="molecule type" value="mRNA"/>
</dbReference>
<dbReference type="EMBL" id="BC121117">
    <property type="protein sequence ID" value="AAI21118.2"/>
    <property type="molecule type" value="mRNA"/>
</dbReference>
<dbReference type="EMBL" id="BC133692">
    <property type="protein sequence ID" value="AAI33693.1"/>
    <property type="molecule type" value="mRNA"/>
</dbReference>
<dbReference type="CCDS" id="CCDS41325.1"/>
<dbReference type="RefSeq" id="NP_057570.2">
    <property type="nucleotide sequence ID" value="NM_016486.4"/>
</dbReference>
<dbReference type="BioGRID" id="119406">
    <property type="interactions" value="21"/>
</dbReference>
<dbReference type="FunCoup" id="Q5SWH9">
    <property type="interactions" value="296"/>
</dbReference>
<dbReference type="IntAct" id="Q5SWH9">
    <property type="interactions" value="19"/>
</dbReference>
<dbReference type="STRING" id="9606.ENSP00000361095"/>
<dbReference type="iPTMnet" id="Q5SWH9"/>
<dbReference type="PhosphoSitePlus" id="Q5SWH9"/>
<dbReference type="BioMuta" id="TMEM69"/>
<dbReference type="DMDM" id="74743934"/>
<dbReference type="jPOST" id="Q5SWH9"/>
<dbReference type="MassIVE" id="Q5SWH9"/>
<dbReference type="PaxDb" id="9606-ENSP00000361095"/>
<dbReference type="PeptideAtlas" id="Q5SWH9"/>
<dbReference type="ProteomicsDB" id="63975"/>
<dbReference type="Pumba" id="Q5SWH9"/>
<dbReference type="Antibodypedia" id="32710">
    <property type="antibodies" value="27 antibodies from 15 providers"/>
</dbReference>
<dbReference type="DNASU" id="51249"/>
<dbReference type="Ensembl" id="ENST00000372025.5">
    <property type="protein sequence ID" value="ENSP00000361095.4"/>
    <property type="gene ID" value="ENSG00000159596.7"/>
</dbReference>
<dbReference type="GeneID" id="51249"/>
<dbReference type="KEGG" id="hsa:51249"/>
<dbReference type="MANE-Select" id="ENST00000372025.5">
    <property type="protein sequence ID" value="ENSP00000361095.4"/>
    <property type="RefSeq nucleotide sequence ID" value="NM_016486.4"/>
    <property type="RefSeq protein sequence ID" value="NP_057570.2"/>
</dbReference>
<dbReference type="UCSC" id="uc001cor.2">
    <property type="organism name" value="human"/>
</dbReference>
<dbReference type="AGR" id="HGNC:28035"/>
<dbReference type="CTD" id="51249"/>
<dbReference type="DisGeNET" id="51249"/>
<dbReference type="GeneCards" id="TMEM69"/>
<dbReference type="HGNC" id="HGNC:28035">
    <property type="gene designation" value="TMEM69"/>
</dbReference>
<dbReference type="HPA" id="ENSG00000159596">
    <property type="expression patterns" value="Low tissue specificity"/>
</dbReference>
<dbReference type="neXtProt" id="NX_Q5SWH9"/>
<dbReference type="OpenTargets" id="ENSG00000159596"/>
<dbReference type="PharmGKB" id="PA142670782"/>
<dbReference type="VEuPathDB" id="HostDB:ENSG00000159596"/>
<dbReference type="eggNOG" id="ENOG502RYSE">
    <property type="taxonomic scope" value="Eukaryota"/>
</dbReference>
<dbReference type="GeneTree" id="ENSGT00390000015318"/>
<dbReference type="HOGENOM" id="CLU_095371_0_0_1"/>
<dbReference type="InParanoid" id="Q5SWH9"/>
<dbReference type="OMA" id="KHLWEGP"/>
<dbReference type="OrthoDB" id="194289at2759"/>
<dbReference type="PAN-GO" id="Q5SWH9">
    <property type="GO annotations" value="0 GO annotations based on evolutionary models"/>
</dbReference>
<dbReference type="PhylomeDB" id="Q5SWH9"/>
<dbReference type="TreeFam" id="TF336126"/>
<dbReference type="PathwayCommons" id="Q5SWH9"/>
<dbReference type="SignaLink" id="Q5SWH9"/>
<dbReference type="BioGRID-ORCS" id="51249">
    <property type="hits" value="35 hits in 1124 CRISPR screens"/>
</dbReference>
<dbReference type="GeneWiki" id="TMEM69"/>
<dbReference type="GenomeRNAi" id="51249"/>
<dbReference type="Pharos" id="Q5SWH9">
    <property type="development level" value="Tdark"/>
</dbReference>
<dbReference type="PRO" id="PR:Q5SWH9"/>
<dbReference type="Proteomes" id="UP000005640">
    <property type="component" value="Chromosome 1"/>
</dbReference>
<dbReference type="RNAct" id="Q5SWH9">
    <property type="molecule type" value="protein"/>
</dbReference>
<dbReference type="Bgee" id="ENSG00000159596">
    <property type="expression patterns" value="Expressed in oocyte and 186 other cell types or tissues"/>
</dbReference>
<dbReference type="GO" id="GO:0016020">
    <property type="term" value="C:membrane"/>
    <property type="evidence" value="ECO:0007669"/>
    <property type="project" value="UniProtKB-SubCell"/>
</dbReference>
<dbReference type="GO" id="GO:0005739">
    <property type="term" value="C:mitochondrion"/>
    <property type="evidence" value="ECO:0006056"/>
    <property type="project" value="FlyBase"/>
</dbReference>
<dbReference type="InterPro" id="IPR021836">
    <property type="entry name" value="DUF3429"/>
</dbReference>
<dbReference type="PANTHER" id="PTHR15887">
    <property type="entry name" value="TRANSMEMBRANE PROTEIN 69"/>
    <property type="match status" value="1"/>
</dbReference>
<dbReference type="PANTHER" id="PTHR15887:SF4">
    <property type="entry name" value="TRANSMEMBRANE PROTEIN 69"/>
    <property type="match status" value="1"/>
</dbReference>
<dbReference type="Pfam" id="PF11911">
    <property type="entry name" value="DUF3429"/>
    <property type="match status" value="1"/>
</dbReference>
<accession>Q5SWH9</accession>
<accession>Q3SWW5</accession>
<accession>Q7Z2G0</accession>
<accession>Q9P0P9</accession>
<name>TMM69_HUMAN</name>
<proteinExistence type="evidence at protein level"/>
<protein>
    <recommendedName>
        <fullName>Transmembrane protein 69</fullName>
    </recommendedName>
</protein>
<gene>
    <name type="primary">TMEM69</name>
    <name type="synonym">C1orf154</name>
    <name type="ORF">HSPC229</name>
</gene>
<keyword id="KW-0472">Membrane</keyword>
<keyword id="KW-1267">Proteomics identification</keyword>
<keyword id="KW-1185">Reference proteome</keyword>
<keyword id="KW-0812">Transmembrane</keyword>
<keyword id="KW-1133">Transmembrane helix</keyword>
<evidence type="ECO:0000255" key="1"/>
<evidence type="ECO:0000305" key="2"/>
<feature type="chain" id="PRO_0000282850" description="Transmembrane protein 69">
    <location>
        <begin position="1"/>
        <end position="247"/>
    </location>
</feature>
<feature type="transmembrane region" description="Helical" evidence="1">
    <location>
        <begin position="97"/>
        <end position="117"/>
    </location>
</feature>
<feature type="transmembrane region" description="Helical" evidence="1">
    <location>
        <begin position="122"/>
        <end position="142"/>
    </location>
</feature>
<feature type="transmembrane region" description="Helical" evidence="1">
    <location>
        <begin position="159"/>
        <end position="179"/>
    </location>
</feature>
<feature type="transmembrane region" description="Helical" evidence="1">
    <location>
        <begin position="185"/>
        <end position="205"/>
    </location>
</feature>
<feature type="transmembrane region" description="Helical" evidence="1">
    <location>
        <begin position="216"/>
        <end position="236"/>
    </location>
</feature>
<feature type="sequence conflict" description="In Ref. 1; AAF36149." evidence="2" ref="1">
    <original>S</original>
    <variation>M</variation>
    <location>
        <position position="12"/>
    </location>
</feature>